<reference key="1">
    <citation type="journal article" date="1997" name="Nihon Shokubutsu Byori Gakkaiho">
        <title>Nucleotide sequence of the Japanese isolate of pepper [Capsicum annuum] mild mottle tobamovirus (TMV-P) RNA.</title>
        <authorList>
            <person name="Kirita M."/>
            <person name="Akutsu K."/>
            <person name="Watanabe Y."/>
            <person name="Tsuda S."/>
        </authorList>
    </citation>
    <scope>NUCLEOTIDE SEQUENCE [MRNA]</scope>
</reference>
<organismHost>
    <name type="scientific">Vicia faba</name>
    <name type="common">Broad bean</name>
    <name type="synonym">Faba vulgaris</name>
    <dbReference type="NCBI Taxonomy" id="3906"/>
</organismHost>
<dbReference type="EMBL" id="AB000709">
    <property type="protein sequence ID" value="BAA19169.1"/>
    <property type="molecule type" value="mRNA"/>
</dbReference>
<dbReference type="RefSeq" id="NP_619743.1">
    <property type="nucleotide sequence ID" value="NC_003630.1"/>
</dbReference>
<dbReference type="SMR" id="P69509"/>
<dbReference type="GeneID" id="940236"/>
<dbReference type="KEGG" id="vg:940236"/>
<dbReference type="Proteomes" id="UP000000475">
    <property type="component" value="Genome"/>
</dbReference>
<dbReference type="GO" id="GO:0019029">
    <property type="term" value="C:helical viral capsid"/>
    <property type="evidence" value="ECO:0007669"/>
    <property type="project" value="UniProtKB-KW"/>
</dbReference>
<dbReference type="GO" id="GO:0005198">
    <property type="term" value="F:structural molecule activity"/>
    <property type="evidence" value="ECO:0007669"/>
    <property type="project" value="InterPro"/>
</dbReference>
<dbReference type="Gene3D" id="1.20.120.70">
    <property type="entry name" value="Tobacco mosaic virus-like, coat protein"/>
    <property type="match status" value="1"/>
</dbReference>
<dbReference type="InterPro" id="IPR001337">
    <property type="entry name" value="TMV-like_coat"/>
</dbReference>
<dbReference type="InterPro" id="IPR036417">
    <property type="entry name" value="TMV-like_coat_sf"/>
</dbReference>
<dbReference type="Pfam" id="PF00721">
    <property type="entry name" value="TMV_coat"/>
    <property type="match status" value="1"/>
</dbReference>
<dbReference type="SUPFAM" id="SSF47195">
    <property type="entry name" value="TMV-like viral coat proteins"/>
    <property type="match status" value="1"/>
</dbReference>
<organism>
    <name type="scientific">Pepper mild mottle virus (strain Japan)</name>
    <name type="common">PMMV-J</name>
    <dbReference type="NCBI Taxonomy" id="138663"/>
    <lineage>
        <taxon>Viruses</taxon>
        <taxon>Riboviria</taxon>
        <taxon>Orthornavirae</taxon>
        <taxon>Kitrinoviricota</taxon>
        <taxon>Alsuviricetes</taxon>
        <taxon>Martellivirales</taxon>
        <taxon>Virgaviridae</taxon>
        <taxon>Tobamovirus</taxon>
        <taxon>Pepper mild mottle virus</taxon>
    </lineage>
</organism>
<gene>
    <name type="primary">CP</name>
</gene>
<accession>P69509</accession>
<accession>P29096</accession>
<keyword id="KW-0007">Acetylation</keyword>
<keyword id="KW-0167">Capsid protein</keyword>
<keyword id="KW-1139">Helical capsid protein</keyword>
<keyword id="KW-0946">Virion</keyword>
<name>CAPSD_PMMVJ</name>
<comment type="function">
    <text>Capsid protein self-assembles to form rod-shaped virions about 18 nm in diameter with a central canal enclosing the viral genomic RNA.</text>
</comment>
<comment type="subcellular location">
    <subcellularLocation>
        <location evidence="2">Virion</location>
    </subcellularLocation>
</comment>
<comment type="similarity">
    <text evidence="2">Belongs to the virgaviridae capsid protein family.</text>
</comment>
<evidence type="ECO:0000250" key="1"/>
<evidence type="ECO:0000305" key="2"/>
<protein>
    <recommendedName>
        <fullName>Capsid protein</fullName>
    </recommendedName>
    <alternativeName>
        <fullName>Coat protein</fullName>
    </alternativeName>
</protein>
<feature type="initiator methionine" description="Removed; by host" evidence="1">
    <location>
        <position position="1"/>
    </location>
</feature>
<feature type="chain" id="PRO_0000144936" description="Capsid protein">
    <location>
        <begin position="2"/>
        <end position="157"/>
    </location>
</feature>
<feature type="modified residue" description="N-acetylalanine; by host" evidence="1">
    <location>
        <position position="2"/>
    </location>
</feature>
<sequence>MAYTVSSANQLVYLGSVWADPLELQNLCTSALGNQFQTQQARTTVQQQFSDVWKTIPTATVRFPATGFKVFRYNAVLDSLVSALLGAFDTRNRIIEVENPQNPTTAETLDATRRVDDATVAIRASISNLMNELVRGTGMYNQALFESASGLTWATTP</sequence>
<proteinExistence type="evidence at transcript level"/>